<protein>
    <recommendedName>
        <fullName evidence="1">Large ribosomal subunit protein uL4</fullName>
    </recommendedName>
    <alternativeName>
        <fullName evidence="3">50S ribosomal protein L4</fullName>
    </alternativeName>
</protein>
<organism>
    <name type="scientific">Beijerinckia indica subsp. indica (strain ATCC 9039 / DSM 1715 / NCIMB 8712)</name>
    <dbReference type="NCBI Taxonomy" id="395963"/>
    <lineage>
        <taxon>Bacteria</taxon>
        <taxon>Pseudomonadati</taxon>
        <taxon>Pseudomonadota</taxon>
        <taxon>Alphaproteobacteria</taxon>
        <taxon>Hyphomicrobiales</taxon>
        <taxon>Beijerinckiaceae</taxon>
        <taxon>Beijerinckia</taxon>
    </lineage>
</organism>
<keyword id="KW-1185">Reference proteome</keyword>
<keyword id="KW-0687">Ribonucleoprotein</keyword>
<keyword id="KW-0689">Ribosomal protein</keyword>
<keyword id="KW-0694">RNA-binding</keyword>
<keyword id="KW-0699">rRNA-binding</keyword>
<comment type="function">
    <text evidence="1">One of the primary rRNA binding proteins, this protein initially binds near the 5'-end of the 23S rRNA. It is important during the early stages of 50S assembly. It makes multiple contacts with different domains of the 23S rRNA in the assembled 50S subunit and ribosome.</text>
</comment>
<comment type="function">
    <text evidence="1">Forms part of the polypeptide exit tunnel.</text>
</comment>
<comment type="subunit">
    <text evidence="1">Part of the 50S ribosomal subunit.</text>
</comment>
<comment type="similarity">
    <text evidence="1">Belongs to the universal ribosomal protein uL4 family.</text>
</comment>
<reference key="1">
    <citation type="journal article" date="2010" name="J. Bacteriol.">
        <title>Complete genome sequence of Beijerinckia indica subsp. indica.</title>
        <authorList>
            <person name="Tamas I."/>
            <person name="Dedysh S.N."/>
            <person name="Liesack W."/>
            <person name="Stott M.B."/>
            <person name="Alam M."/>
            <person name="Murrell J.C."/>
            <person name="Dunfield P.F."/>
        </authorList>
    </citation>
    <scope>NUCLEOTIDE SEQUENCE [LARGE SCALE GENOMIC DNA]</scope>
    <source>
        <strain>ATCC 9039 / DSM 1715 / NCIMB 8712</strain>
    </source>
</reference>
<dbReference type="EMBL" id="CP001016">
    <property type="protein sequence ID" value="ACB94995.1"/>
    <property type="molecule type" value="Genomic_DNA"/>
</dbReference>
<dbReference type="RefSeq" id="WP_012384352.1">
    <property type="nucleotide sequence ID" value="NC_010581.1"/>
</dbReference>
<dbReference type="SMR" id="B2IK63"/>
<dbReference type="STRING" id="395963.Bind_1355"/>
<dbReference type="KEGG" id="bid:Bind_1355"/>
<dbReference type="eggNOG" id="COG0088">
    <property type="taxonomic scope" value="Bacteria"/>
</dbReference>
<dbReference type="HOGENOM" id="CLU_041575_5_1_5"/>
<dbReference type="OrthoDB" id="9803201at2"/>
<dbReference type="Proteomes" id="UP000001695">
    <property type="component" value="Chromosome"/>
</dbReference>
<dbReference type="GO" id="GO:1990904">
    <property type="term" value="C:ribonucleoprotein complex"/>
    <property type="evidence" value="ECO:0007669"/>
    <property type="project" value="UniProtKB-KW"/>
</dbReference>
<dbReference type="GO" id="GO:0005840">
    <property type="term" value="C:ribosome"/>
    <property type="evidence" value="ECO:0007669"/>
    <property type="project" value="UniProtKB-KW"/>
</dbReference>
<dbReference type="GO" id="GO:0019843">
    <property type="term" value="F:rRNA binding"/>
    <property type="evidence" value="ECO:0007669"/>
    <property type="project" value="UniProtKB-UniRule"/>
</dbReference>
<dbReference type="GO" id="GO:0003735">
    <property type="term" value="F:structural constituent of ribosome"/>
    <property type="evidence" value="ECO:0007669"/>
    <property type="project" value="InterPro"/>
</dbReference>
<dbReference type="GO" id="GO:0006412">
    <property type="term" value="P:translation"/>
    <property type="evidence" value="ECO:0007669"/>
    <property type="project" value="UniProtKB-UniRule"/>
</dbReference>
<dbReference type="Gene3D" id="3.40.1370.10">
    <property type="match status" value="1"/>
</dbReference>
<dbReference type="HAMAP" id="MF_01328_B">
    <property type="entry name" value="Ribosomal_uL4_B"/>
    <property type="match status" value="1"/>
</dbReference>
<dbReference type="InterPro" id="IPR002136">
    <property type="entry name" value="Ribosomal_uL4"/>
</dbReference>
<dbReference type="InterPro" id="IPR013005">
    <property type="entry name" value="Ribosomal_uL4-like"/>
</dbReference>
<dbReference type="InterPro" id="IPR023574">
    <property type="entry name" value="Ribosomal_uL4_dom_sf"/>
</dbReference>
<dbReference type="NCBIfam" id="TIGR03953">
    <property type="entry name" value="rplD_bact"/>
    <property type="match status" value="1"/>
</dbReference>
<dbReference type="PANTHER" id="PTHR10746">
    <property type="entry name" value="50S RIBOSOMAL PROTEIN L4"/>
    <property type="match status" value="1"/>
</dbReference>
<dbReference type="PANTHER" id="PTHR10746:SF6">
    <property type="entry name" value="LARGE RIBOSOMAL SUBUNIT PROTEIN UL4M"/>
    <property type="match status" value="1"/>
</dbReference>
<dbReference type="Pfam" id="PF00573">
    <property type="entry name" value="Ribosomal_L4"/>
    <property type="match status" value="1"/>
</dbReference>
<dbReference type="SUPFAM" id="SSF52166">
    <property type="entry name" value="Ribosomal protein L4"/>
    <property type="match status" value="1"/>
</dbReference>
<gene>
    <name evidence="1" type="primary">rplD</name>
    <name type="ordered locus">Bind_1355</name>
</gene>
<proteinExistence type="inferred from homology"/>
<sequence>MKIDITSVNGETAGSIDLDDAIFGLEPRVDLIARMIRYQLAKRRAGTHQSLGRADIHRTGKKMYKQKGTGSARHGSARAPQFRGGGKAFGPVARSHEHDLPKKIRALALKHALSAKAKDGGIIIWNDAKIPEAKTKGLKANFEKIGLTNALIIDGAELETNFSLAARNIPQIDVLPVQGINVYDIVRRDKLVLTTAAINALEARFK</sequence>
<evidence type="ECO:0000255" key="1">
    <source>
        <dbReference type="HAMAP-Rule" id="MF_01328"/>
    </source>
</evidence>
<evidence type="ECO:0000256" key="2">
    <source>
        <dbReference type="SAM" id="MobiDB-lite"/>
    </source>
</evidence>
<evidence type="ECO:0000305" key="3"/>
<feature type="chain" id="PRO_1000142082" description="Large ribosomal subunit protein uL4">
    <location>
        <begin position="1"/>
        <end position="206"/>
    </location>
</feature>
<feature type="region of interest" description="Disordered" evidence="2">
    <location>
        <begin position="63"/>
        <end position="85"/>
    </location>
</feature>
<accession>B2IK63</accession>
<name>RL4_BEII9</name>